<name>GBRE_RAT</name>
<dbReference type="EMBL" id="AF255612">
    <property type="protein sequence ID" value="AAG17631.1"/>
    <property type="molecule type" value="mRNA"/>
</dbReference>
<dbReference type="EMBL" id="U92284">
    <property type="protein sequence ID" value="AAB93879.1"/>
    <property type="molecule type" value="Genomic_DNA"/>
</dbReference>
<dbReference type="SMR" id="Q9ES14"/>
<dbReference type="FunCoup" id="Q9ES14">
    <property type="interactions" value="26"/>
</dbReference>
<dbReference type="STRING" id="10116.ENSRNOP00000075293"/>
<dbReference type="ChEMBL" id="CHEMBL1907607"/>
<dbReference type="DrugCentral" id="Q9ES14"/>
<dbReference type="GlyCosmos" id="Q9ES14">
    <property type="glycosylation" value="2 sites, No reported glycans"/>
</dbReference>
<dbReference type="GlyGen" id="Q9ES14">
    <property type="glycosylation" value="2 sites"/>
</dbReference>
<dbReference type="PhosphoSitePlus" id="Q9ES14"/>
<dbReference type="PaxDb" id="10116-ENSRNOP00000022431"/>
<dbReference type="ABCD" id="Q9ES14">
    <property type="antibodies" value="1 sequenced antibody"/>
</dbReference>
<dbReference type="AGR" id="RGD:68320"/>
<dbReference type="RGD" id="68320">
    <property type="gene designation" value="Gabre"/>
</dbReference>
<dbReference type="eggNOG" id="KOG3642">
    <property type="taxonomic scope" value="Eukaryota"/>
</dbReference>
<dbReference type="InParanoid" id="Q9ES14"/>
<dbReference type="PRO" id="PR:Q9ES14"/>
<dbReference type="Proteomes" id="UP000002494">
    <property type="component" value="Unplaced"/>
</dbReference>
<dbReference type="GO" id="GO:0034707">
    <property type="term" value="C:chloride channel complex"/>
    <property type="evidence" value="ECO:0007669"/>
    <property type="project" value="UniProtKB-KW"/>
</dbReference>
<dbReference type="GO" id="GO:0032590">
    <property type="term" value="C:dendrite membrane"/>
    <property type="evidence" value="ECO:0000318"/>
    <property type="project" value="GO_Central"/>
</dbReference>
<dbReference type="GO" id="GO:1902711">
    <property type="term" value="C:GABA-A receptor complex"/>
    <property type="evidence" value="ECO:0000266"/>
    <property type="project" value="RGD"/>
</dbReference>
<dbReference type="GO" id="GO:0098982">
    <property type="term" value="C:GABA-ergic synapse"/>
    <property type="evidence" value="ECO:0000314"/>
    <property type="project" value="SynGO"/>
</dbReference>
<dbReference type="GO" id="GO:0098794">
    <property type="term" value="C:postsynapse"/>
    <property type="evidence" value="ECO:0000318"/>
    <property type="project" value="GO_Central"/>
</dbReference>
<dbReference type="GO" id="GO:0045211">
    <property type="term" value="C:postsynaptic membrane"/>
    <property type="evidence" value="ECO:0000314"/>
    <property type="project" value="SynGO"/>
</dbReference>
<dbReference type="GO" id="GO:0004890">
    <property type="term" value="F:GABA-A receptor activity"/>
    <property type="evidence" value="ECO:0000314"/>
    <property type="project" value="RGD"/>
</dbReference>
<dbReference type="GO" id="GO:0022851">
    <property type="term" value="F:GABA-gated chloride ion channel activity"/>
    <property type="evidence" value="ECO:0000250"/>
    <property type="project" value="UniProtKB"/>
</dbReference>
<dbReference type="GO" id="GO:1904315">
    <property type="term" value="F:transmitter-gated monoatomic ion channel activity involved in regulation of postsynaptic membrane potential"/>
    <property type="evidence" value="ECO:0000314"/>
    <property type="project" value="SynGO"/>
</dbReference>
<dbReference type="GO" id="GO:1902476">
    <property type="term" value="P:chloride transmembrane transport"/>
    <property type="evidence" value="ECO:0000318"/>
    <property type="project" value="GO_Central"/>
</dbReference>
<dbReference type="GO" id="GO:0006821">
    <property type="term" value="P:chloride transport"/>
    <property type="evidence" value="ECO:0000304"/>
    <property type="project" value="RGD"/>
</dbReference>
<dbReference type="GO" id="GO:0007214">
    <property type="term" value="P:gamma-aminobutyric acid signaling pathway"/>
    <property type="evidence" value="ECO:0000314"/>
    <property type="project" value="RGD"/>
</dbReference>
<dbReference type="GO" id="GO:1904862">
    <property type="term" value="P:inhibitory synapse assembly"/>
    <property type="evidence" value="ECO:0000318"/>
    <property type="project" value="GO_Central"/>
</dbReference>
<dbReference type="GO" id="GO:2001226">
    <property type="term" value="P:negative regulation of chloride transport"/>
    <property type="evidence" value="ECO:0000266"/>
    <property type="project" value="RGD"/>
</dbReference>
<dbReference type="GO" id="GO:0009410">
    <property type="term" value="P:response to xenobiotic stimulus"/>
    <property type="evidence" value="ECO:0000270"/>
    <property type="project" value="RGD"/>
</dbReference>
<dbReference type="GO" id="GO:0051932">
    <property type="term" value="P:synaptic transmission, GABAergic"/>
    <property type="evidence" value="ECO:0000318"/>
    <property type="project" value="GO_Central"/>
</dbReference>
<dbReference type="FunFam" id="1.20.58.390:FF:000032">
    <property type="entry name" value="gamma-aminobutyric acid receptor subunit epsilon"/>
    <property type="match status" value="1"/>
</dbReference>
<dbReference type="FunFam" id="2.70.170.10:FF:000003">
    <property type="entry name" value="Putative gamma-aminobutyric acid receptor subunit gamma-2"/>
    <property type="match status" value="1"/>
</dbReference>
<dbReference type="Gene3D" id="2.70.170.10">
    <property type="entry name" value="Neurotransmitter-gated ion-channel ligand-binding domain"/>
    <property type="match status" value="1"/>
</dbReference>
<dbReference type="Gene3D" id="1.20.58.390">
    <property type="entry name" value="Neurotransmitter-gated ion-channel transmembrane domain"/>
    <property type="match status" value="1"/>
</dbReference>
<dbReference type="InterPro" id="IPR006028">
    <property type="entry name" value="GABAA/Glycine_rcpt"/>
</dbReference>
<dbReference type="InterPro" id="IPR008099">
    <property type="entry name" value="GABAAe_rcpt"/>
</dbReference>
<dbReference type="InterPro" id="IPR006202">
    <property type="entry name" value="Neur_chan_lig-bd"/>
</dbReference>
<dbReference type="InterPro" id="IPR036734">
    <property type="entry name" value="Neur_chan_lig-bd_sf"/>
</dbReference>
<dbReference type="InterPro" id="IPR006201">
    <property type="entry name" value="Neur_channel"/>
</dbReference>
<dbReference type="InterPro" id="IPR036719">
    <property type="entry name" value="Neuro-gated_channel_TM_sf"/>
</dbReference>
<dbReference type="InterPro" id="IPR038050">
    <property type="entry name" value="Neuro_actylchol_rec"/>
</dbReference>
<dbReference type="InterPro" id="IPR006029">
    <property type="entry name" value="Neurotrans-gated_channel_TM"/>
</dbReference>
<dbReference type="InterPro" id="IPR018000">
    <property type="entry name" value="Neurotransmitter_ion_chnl_CS"/>
</dbReference>
<dbReference type="NCBIfam" id="TIGR00860">
    <property type="entry name" value="LIC"/>
    <property type="match status" value="1"/>
</dbReference>
<dbReference type="PANTHER" id="PTHR18945">
    <property type="entry name" value="NEUROTRANSMITTER GATED ION CHANNEL"/>
    <property type="match status" value="1"/>
</dbReference>
<dbReference type="Pfam" id="PF02931">
    <property type="entry name" value="Neur_chan_LBD"/>
    <property type="match status" value="1"/>
</dbReference>
<dbReference type="Pfam" id="PF02932">
    <property type="entry name" value="Neur_chan_memb"/>
    <property type="match status" value="1"/>
</dbReference>
<dbReference type="PRINTS" id="PR00253">
    <property type="entry name" value="GABAARECEPTR"/>
</dbReference>
<dbReference type="PRINTS" id="PR01723">
    <property type="entry name" value="GABAAREPSLON"/>
</dbReference>
<dbReference type="PRINTS" id="PR00252">
    <property type="entry name" value="NRIONCHANNEL"/>
</dbReference>
<dbReference type="SUPFAM" id="SSF90112">
    <property type="entry name" value="Neurotransmitter-gated ion-channel transmembrane pore"/>
    <property type="match status" value="1"/>
</dbReference>
<dbReference type="SUPFAM" id="SSF63712">
    <property type="entry name" value="Nicotinic receptor ligand binding domain-like"/>
    <property type="match status" value="1"/>
</dbReference>
<dbReference type="PROSITE" id="PS00236">
    <property type="entry name" value="NEUROTR_ION_CHANNEL"/>
    <property type="match status" value="1"/>
</dbReference>
<gene>
    <name evidence="11" type="primary">Gabre</name>
</gene>
<sequence>MLPKVLLMLLNMFLALQWRVGPHIKLENKPPAQDKVVFGPQPQPSGKKLPARETELTADHTTERPRGKLTRASQILNTILSNYDHKLRPSIGEKPTVVTVKVFVNSLGPISILDMEYSIDIIFYQTWYDERLRYNDTFETLILHGNVVSQLWIPDTFFRNSKRTQEYDITIPNQMALIHKDGKVLYTVRMTIDARCSLHMLNFPMDSHSCPLSFSSFSYDEHEMIYKWENFKLKIDAKNTWKLLEFDFTGVNNKTEIISTPVGDFMVMTFFFNVSRRFGFIVFQNYIPSSVTTMLSWVSFWIKIEAAAARASVGVSSVLTMATLGTFSRKNFPRVSYLTALDFYIAICFVLCFCTLLEFTVLNFLTYNNIERQASPKFYQFPTNSRANARTRARARTRARARARARQQQEVFVCEIVTYEENAEEGYQWSPRSRRPQCPWRRCGRSYVCFRVLRKYFCMVPGCEGNNWQRGRICIHVYRLDNYSRVLFPITFFFFNVVYWVICLNL</sequence>
<organism>
    <name type="scientific">Rattus norvegicus</name>
    <name type="common">Rat</name>
    <dbReference type="NCBI Taxonomy" id="10116"/>
    <lineage>
        <taxon>Eukaryota</taxon>
        <taxon>Metazoa</taxon>
        <taxon>Chordata</taxon>
        <taxon>Craniata</taxon>
        <taxon>Vertebrata</taxon>
        <taxon>Euteleostomi</taxon>
        <taxon>Mammalia</taxon>
        <taxon>Eutheria</taxon>
        <taxon>Euarchontoglires</taxon>
        <taxon>Glires</taxon>
        <taxon>Rodentia</taxon>
        <taxon>Myomorpha</taxon>
        <taxon>Muroidea</taxon>
        <taxon>Muridae</taxon>
        <taxon>Murinae</taxon>
        <taxon>Rattus</taxon>
    </lineage>
</organism>
<reference key="1">
    <citation type="journal article" date="2000" name="Eur. J. Neurosci.">
        <title>cDNA cloning and expression of a gamma-aminobutyric acid A receptor epsilon-subunit in rat brain.</title>
        <authorList>
            <person name="Moragues N."/>
            <person name="Ciofi P."/>
            <person name="Lafon P."/>
            <person name="Odessa M.F."/>
            <person name="Tramu G."/>
            <person name="Garret M."/>
        </authorList>
    </citation>
    <scope>NUCLEOTIDE SEQUENCE</scope>
</reference>
<reference key="2">
    <citation type="submission" date="1997-03" db="EMBL/GenBank/DDBJ databases">
        <title>Alternative transcripts of a gene encoding the GABA-A receptor epsilon subunit on chromosome Xq28.</title>
        <authorList>
            <person name="Hanna M.C."/>
            <person name="Hales T.G."/>
            <person name="Kirkness E.F."/>
        </authorList>
    </citation>
    <scope>NUCLEOTIDE SEQUENCE [GENOMIC DNA] OF 123-506</scope>
</reference>
<reference key="3">
    <citation type="journal article" date="2000" name="J. Neurosci.">
        <title>GABAA receptor epsilon and theta subunits display unusual structural variation between species and are enriched in the rat locus ceruleus.</title>
        <authorList>
            <person name="Sinkkonen S.T."/>
            <person name="Hanna M.C."/>
            <person name="Kirkness E.F."/>
            <person name="Korpi E.R."/>
        </authorList>
    </citation>
    <scope>TISSUE SPECIFICITY</scope>
</reference>
<proteinExistence type="evidence at transcript level"/>
<feature type="signal peptide" evidence="7">
    <location>
        <begin position="1"/>
        <end position="17"/>
    </location>
</feature>
<feature type="chain" id="PRO_0000460468" description="Gamma-aminobutyric acid receptor subunit epsilon" evidence="7">
    <location>
        <begin position="18"/>
        <end position="506"/>
    </location>
</feature>
<feature type="topological domain" description="Extracellular" evidence="10">
    <location>
        <begin position="18"/>
        <end position="277"/>
    </location>
</feature>
<feature type="transmembrane region" description="Helical" evidence="7">
    <location>
        <begin position="278"/>
        <end position="298"/>
    </location>
</feature>
<feature type="topological domain" description="Cytoplasmic" evidence="10">
    <location>
        <begin position="299"/>
        <end position="308"/>
    </location>
</feature>
<feature type="transmembrane region" description="Helical" evidence="7">
    <location>
        <begin position="309"/>
        <end position="328"/>
    </location>
</feature>
<feature type="topological domain" description="Extracellular" evidence="10">
    <location>
        <begin position="329"/>
        <end position="344"/>
    </location>
</feature>
<feature type="transmembrane region" description="Helical" evidence="7">
    <location>
        <begin position="345"/>
        <end position="365"/>
    </location>
</feature>
<feature type="topological domain" description="Cytoplasmic" evidence="10">
    <location>
        <begin position="366"/>
        <end position="485"/>
    </location>
</feature>
<feature type="transmembrane region" description="Helical" evidence="7">
    <location>
        <begin position="486"/>
        <end position="506"/>
    </location>
</feature>
<feature type="region of interest" description="Disordered" evidence="8">
    <location>
        <begin position="32"/>
        <end position="65"/>
    </location>
</feature>
<feature type="compositionally biased region" description="Basic and acidic residues" evidence="8">
    <location>
        <begin position="50"/>
        <end position="65"/>
    </location>
</feature>
<feature type="glycosylation site" description="N-linked (GlcNAc...) asparagine" evidence="7">
    <location>
        <position position="135"/>
    </location>
</feature>
<feature type="glycosylation site" description="N-linked (GlcNAc...) asparagine" evidence="7">
    <location>
        <position position="253"/>
    </location>
</feature>
<feature type="disulfide bond" evidence="4">
    <location>
        <begin position="196"/>
        <end position="210"/>
    </location>
</feature>
<feature type="sequence conflict" description="In Ref. 2; AAB93879." evidence="10" ref="2">
    <original>R</original>
    <variation>C</variation>
    <location>
        <position position="133"/>
    </location>
</feature>
<feature type="sequence conflict" description="In Ref. 2; AAB93879." evidence="10" ref="2">
    <original>N</original>
    <variation>S</variation>
    <location>
        <position position="467"/>
    </location>
</feature>
<evidence type="ECO:0000250" key="1">
    <source>
        <dbReference type="UniProtKB" id="P08219"/>
    </source>
</evidence>
<evidence type="ECO:0000250" key="2">
    <source>
        <dbReference type="UniProtKB" id="P14867"/>
    </source>
</evidence>
<evidence type="ECO:0000250" key="3">
    <source>
        <dbReference type="UniProtKB" id="P18507"/>
    </source>
</evidence>
<evidence type="ECO:0000250" key="4">
    <source>
        <dbReference type="UniProtKB" id="P28472"/>
    </source>
</evidence>
<evidence type="ECO:0000250" key="5">
    <source>
        <dbReference type="UniProtKB" id="P47870"/>
    </source>
</evidence>
<evidence type="ECO:0000250" key="6">
    <source>
        <dbReference type="UniProtKB" id="P78334"/>
    </source>
</evidence>
<evidence type="ECO:0000255" key="7"/>
<evidence type="ECO:0000256" key="8">
    <source>
        <dbReference type="SAM" id="MobiDB-lite"/>
    </source>
</evidence>
<evidence type="ECO:0000269" key="9">
    <source>
    </source>
</evidence>
<evidence type="ECO:0000305" key="10"/>
<evidence type="ECO:0000312" key="11">
    <source>
        <dbReference type="RGD" id="68320"/>
    </source>
</evidence>
<protein>
    <recommendedName>
        <fullName>Gamma-aminobutyric acid receptor subunit epsilon</fullName>
    </recommendedName>
    <alternativeName>
        <fullName evidence="6">GABA(A) receptor subunit epsilon</fullName>
        <shortName evidence="2">GABAAR subunit epsilon</shortName>
    </alternativeName>
</protein>
<accession>Q9ES14</accession>
<accession>O55209</accession>
<comment type="function">
    <text evidence="1 5 6">Epsilon subunit of the heteropentameric ligand-gated chloride channel gated by gamma-aminobutyric acid (GABA), a major inhibitory neurotransmitter in the brain (By similarity). GABA-gated chloride channels, also named GABA(A) receptors (GABAAR), consist of five subunits arranged around a central pore and contain GABA active binding site(s) located at the alpha and beta subunit interfaces (By similarity). When activated by GABA, GABAARs selectively allow the flow of chloride anions across the cell membrane down their electrochemical gradient (By similarity). GABARs containing epsilon subunit may also permit spontaneous chloride channel activity while preserving the structural information required for GABA-gated openings (By similarity). GABARs containing epsilon subunit may regulate cardiac function (By similarity).</text>
</comment>
<comment type="catalytic activity">
    <reaction evidence="6">
        <text>chloride(in) = chloride(out)</text>
        <dbReference type="Rhea" id="RHEA:29823"/>
        <dbReference type="ChEBI" id="CHEBI:17996"/>
    </reaction>
</comment>
<comment type="subunit">
    <text evidence="3">Heteropentamer, formed by a combination of alpha (GABRA1-6), beta (GABRB1-3), gamma (GABRG1-3), delta (GABRD), epsilon (GABRE), rho (GABRR1-3), pi (GABRP) and theta (GABRQ) chains, each subunit exhibiting distinct physiological and pharmacological properties.</text>
</comment>
<comment type="subcellular location">
    <subcellularLocation>
        <location>Cell membrane</location>
        <topology evidence="7">Multi-pass membrane protein</topology>
    </subcellularLocation>
    <subcellularLocation>
        <location>Postsynaptic cell membrane</location>
        <topology evidence="7">Multi-pass membrane protein</topology>
    </subcellularLocation>
</comment>
<comment type="tissue specificity">
    <text evidence="9">Expressed in brain and heart (PubMed:10804200). Strongly expressed in locus ceruleus from the first postnatal day (PubMed:10804200). Weakly expressed in other brainstem nuclei and in the hypothalamus (PubMed:10804200). Found in the cerebral cortex of pups (PubMed:10804200).</text>
</comment>
<comment type="domain">
    <text evidence="3">GABAARs subunits share a common topological structure: a peptide sequence made up of a long extracellular N-terminal, four transmembrane domains, intracellular or cytoplasmic domain located between the third and the fourth transmembrane domains.</text>
</comment>
<comment type="similarity">
    <text evidence="10">Belongs to the ligand-gated ion channel (TC 1.A.9) family. Gamma-aminobutyric acid receptor (TC 1.A.9.5) subfamily. GABRE sub-subfamily.</text>
</comment>
<keyword id="KW-1003">Cell membrane</keyword>
<keyword id="KW-0868">Chloride</keyword>
<keyword id="KW-0869">Chloride channel</keyword>
<keyword id="KW-1015">Disulfide bond</keyword>
<keyword id="KW-0325">Glycoprotein</keyword>
<keyword id="KW-0407">Ion channel</keyword>
<keyword id="KW-0406">Ion transport</keyword>
<keyword id="KW-0472">Membrane</keyword>
<keyword id="KW-0628">Postsynaptic cell membrane</keyword>
<keyword id="KW-1185">Reference proteome</keyword>
<keyword id="KW-0732">Signal</keyword>
<keyword id="KW-0770">Synapse</keyword>
<keyword id="KW-0812">Transmembrane</keyword>
<keyword id="KW-1133">Transmembrane helix</keyword>
<keyword id="KW-0813">Transport</keyword>